<feature type="chain" id="PRO_0000456697" description="Inositol-3-phosphate synthase 1">
    <location>
        <begin position="1"/>
        <end position="604"/>
    </location>
</feature>
<feature type="binding site" evidence="1">
    <location>
        <position position="88"/>
    </location>
    <ligand>
        <name>NAD(+)</name>
        <dbReference type="ChEBI" id="CHEBI:57540"/>
    </ligand>
</feature>
<feature type="binding site" evidence="1">
    <location>
        <position position="89"/>
    </location>
    <ligand>
        <name>NAD(+)</name>
        <dbReference type="ChEBI" id="CHEBI:57540"/>
    </ligand>
</feature>
<feature type="binding site" evidence="1">
    <location>
        <position position="90"/>
    </location>
    <ligand>
        <name>NAD(+)</name>
        <dbReference type="ChEBI" id="CHEBI:57540"/>
    </ligand>
</feature>
<feature type="binding site" evidence="1">
    <location>
        <position position="91"/>
    </location>
    <ligand>
        <name>NAD(+)</name>
        <dbReference type="ChEBI" id="CHEBI:57540"/>
    </ligand>
</feature>
<feature type="binding site" evidence="1">
    <location>
        <position position="163"/>
    </location>
    <ligand>
        <name>NAD(+)</name>
        <dbReference type="ChEBI" id="CHEBI:57540"/>
    </ligand>
</feature>
<feature type="binding site" evidence="1">
    <location>
        <position position="198"/>
    </location>
    <ligand>
        <name>NAD(+)</name>
        <dbReference type="ChEBI" id="CHEBI:57540"/>
    </ligand>
</feature>
<feature type="binding site" evidence="1">
    <location>
        <position position="199"/>
    </location>
    <ligand>
        <name>NAD(+)</name>
        <dbReference type="ChEBI" id="CHEBI:57540"/>
    </ligand>
</feature>
<feature type="binding site" evidence="1">
    <location>
        <position position="210"/>
    </location>
    <ligand>
        <name>NAD(+)</name>
        <dbReference type="ChEBI" id="CHEBI:57540"/>
    </ligand>
</feature>
<feature type="binding site" evidence="1">
    <location>
        <position position="213"/>
    </location>
    <ligand>
        <name>NAD(+)</name>
        <dbReference type="ChEBI" id="CHEBI:57540"/>
    </ligand>
</feature>
<feature type="binding site" evidence="1">
    <location>
        <position position="251"/>
    </location>
    <ligand>
        <name>NAD(+)</name>
        <dbReference type="ChEBI" id="CHEBI:57540"/>
    </ligand>
</feature>
<feature type="binding site" evidence="1">
    <location>
        <position position="252"/>
    </location>
    <ligand>
        <name>NAD(+)</name>
        <dbReference type="ChEBI" id="CHEBI:57540"/>
    </ligand>
</feature>
<feature type="binding site" evidence="1">
    <location>
        <position position="253"/>
    </location>
    <ligand>
        <name>NAD(+)</name>
        <dbReference type="ChEBI" id="CHEBI:57540"/>
    </ligand>
</feature>
<feature type="binding site" evidence="1">
    <location>
        <position position="254"/>
    </location>
    <ligand>
        <name>NAD(+)</name>
        <dbReference type="ChEBI" id="CHEBI:57540"/>
    </ligand>
</feature>
<feature type="binding site" evidence="1">
    <location>
        <position position="303"/>
    </location>
    <ligand>
        <name>NAD(+)</name>
        <dbReference type="ChEBI" id="CHEBI:57540"/>
    </ligand>
</feature>
<feature type="binding site" evidence="1">
    <location>
        <position position="327"/>
    </location>
    <ligand>
        <name>NAD(+)</name>
        <dbReference type="ChEBI" id="CHEBI:57540"/>
    </ligand>
</feature>
<feature type="binding site" evidence="1">
    <location>
        <position position="328"/>
    </location>
    <ligand>
        <name>NAD(+)</name>
        <dbReference type="ChEBI" id="CHEBI:57540"/>
    </ligand>
</feature>
<feature type="binding site" evidence="1">
    <location>
        <position position="330"/>
    </location>
    <ligand>
        <name>NAD(+)</name>
        <dbReference type="ChEBI" id="CHEBI:57540"/>
    </ligand>
</feature>
<feature type="binding site" evidence="1">
    <location>
        <position position="361"/>
    </location>
    <ligand>
        <name>NAD(+)</name>
        <dbReference type="ChEBI" id="CHEBI:57540"/>
    </ligand>
</feature>
<feature type="binding site" evidence="1">
    <location>
        <position position="362"/>
    </location>
    <ligand>
        <name>NAD(+)</name>
        <dbReference type="ChEBI" id="CHEBI:57540"/>
    </ligand>
</feature>
<feature type="binding site" evidence="1">
    <location>
        <position position="363"/>
    </location>
    <ligand>
        <name>NAD(+)</name>
        <dbReference type="ChEBI" id="CHEBI:57540"/>
    </ligand>
</feature>
<feature type="binding site" evidence="1">
    <location>
        <position position="376"/>
    </location>
    <ligand>
        <name>NAD(+)</name>
        <dbReference type="ChEBI" id="CHEBI:57540"/>
    </ligand>
</feature>
<feature type="binding site" evidence="1">
    <location>
        <position position="456"/>
    </location>
    <ligand>
        <name>NAD(+)</name>
        <dbReference type="ChEBI" id="CHEBI:57540"/>
    </ligand>
</feature>
<feature type="binding site" evidence="1">
    <location>
        <position position="457"/>
    </location>
    <ligand>
        <name>NAD(+)</name>
        <dbReference type="ChEBI" id="CHEBI:57540"/>
    </ligand>
</feature>
<feature type="binding site" evidence="1">
    <location>
        <position position="485"/>
    </location>
    <ligand>
        <name>NAD(+)</name>
        <dbReference type="ChEBI" id="CHEBI:57540"/>
    </ligand>
</feature>
<feature type="binding site" evidence="1">
    <location>
        <position position="486"/>
    </location>
    <ligand>
        <name>NAD(+)</name>
        <dbReference type="ChEBI" id="CHEBI:57540"/>
    </ligand>
</feature>
<organism evidence="8">
    <name type="scientific">Plasmodium falciparum (isolate 3D7)</name>
    <dbReference type="NCBI Taxonomy" id="36329"/>
    <lineage>
        <taxon>Eukaryota</taxon>
        <taxon>Sar</taxon>
        <taxon>Alveolata</taxon>
        <taxon>Apicomplexa</taxon>
        <taxon>Aconoidasida</taxon>
        <taxon>Haemosporida</taxon>
        <taxon>Plasmodiidae</taxon>
        <taxon>Plasmodium</taxon>
        <taxon>Plasmodium (Laverania)</taxon>
    </lineage>
</organism>
<gene>
    <name evidence="5" type="primary">INO1</name>
    <name evidence="7" type="ORF">PF3D7_0511800</name>
</gene>
<comment type="function">
    <text evidence="1 3 4">Key enzyme in myo-inositol biosynthesis pathway that catalyzes the conversion of glucose 6-phosphate to 1-myo-inositol 1-phosphate in a NAD-dependent manner (By similarity). Rate-limiting enzyme in the synthesis of all inositol-containing compounds (By similarity). De novo-synthesized myo-inositol is essential for incorporation into GPI (glycosylphosphatidylinositol) glycolipids during intra-erythrocytic development (PubMed:24350823).</text>
</comment>
<comment type="catalytic activity">
    <reaction evidence="1">
        <text>D-glucose 6-phosphate = 1D-myo-inositol 3-phosphate</text>
        <dbReference type="Rhea" id="RHEA:10716"/>
        <dbReference type="ChEBI" id="CHEBI:58401"/>
        <dbReference type="ChEBI" id="CHEBI:61548"/>
        <dbReference type="EC" id="5.5.1.4"/>
    </reaction>
</comment>
<comment type="cofactor">
    <cofactor evidence="1">
        <name>NAD(+)</name>
        <dbReference type="ChEBI" id="CHEBI:57540"/>
    </cofactor>
</comment>
<comment type="pathway">
    <text evidence="6">Polyol metabolism; myo-inositol biosynthesis; myo-inositol from D-glucose 6-phosphate: step 1/2.</text>
</comment>
<comment type="similarity">
    <text evidence="6">Belongs to the myo-inositol 1-phosphate synthase family.</text>
</comment>
<dbReference type="EC" id="5.5.1.4" evidence="1"/>
<dbReference type="EMBL" id="AL844504">
    <property type="protein sequence ID" value="CAD51482.1"/>
    <property type="molecule type" value="Genomic_DNA"/>
</dbReference>
<dbReference type="RefSeq" id="XP_001351675.1">
    <property type="nucleotide sequence ID" value="XM_001351639.1"/>
</dbReference>
<dbReference type="SMR" id="Q8I3Y8"/>
<dbReference type="FunCoup" id="Q8I3Y8">
    <property type="interactions" value="110"/>
</dbReference>
<dbReference type="STRING" id="36329.Q8I3Y8"/>
<dbReference type="PaxDb" id="5833-PFE0585c"/>
<dbReference type="EnsemblProtists" id="CAD51482">
    <property type="protein sequence ID" value="CAD51482"/>
    <property type="gene ID" value="PF3D7_0511800"/>
</dbReference>
<dbReference type="GeneID" id="812935"/>
<dbReference type="KEGG" id="pfa:PF3D7_0511800"/>
<dbReference type="VEuPathDB" id="PlasmoDB:PF3D7_0511800"/>
<dbReference type="HOGENOM" id="CLU_021486_2_0_1"/>
<dbReference type="InParanoid" id="Q8I3Y8"/>
<dbReference type="OMA" id="VYVPMKE"/>
<dbReference type="OrthoDB" id="2887at2759"/>
<dbReference type="PhylomeDB" id="Q8I3Y8"/>
<dbReference type="Reactome" id="R-PFA-1855183">
    <property type="pathway name" value="Synthesis of IP2, IP, and Ins in the cytosol"/>
</dbReference>
<dbReference type="UniPathway" id="UPA00823">
    <property type="reaction ID" value="UER00787"/>
</dbReference>
<dbReference type="Proteomes" id="UP000001450">
    <property type="component" value="Chromosome 5"/>
</dbReference>
<dbReference type="GO" id="GO:0005737">
    <property type="term" value="C:cytoplasm"/>
    <property type="evidence" value="ECO:0000318"/>
    <property type="project" value="GO_Central"/>
</dbReference>
<dbReference type="GO" id="GO:0004512">
    <property type="term" value="F:inositol-3-phosphate synthase activity"/>
    <property type="evidence" value="ECO:0000314"/>
    <property type="project" value="GeneDB"/>
</dbReference>
<dbReference type="GO" id="GO:0006021">
    <property type="term" value="P:inositol biosynthetic process"/>
    <property type="evidence" value="ECO:0000314"/>
    <property type="project" value="GeneDB"/>
</dbReference>
<dbReference type="GO" id="GO:0008654">
    <property type="term" value="P:phospholipid biosynthetic process"/>
    <property type="evidence" value="ECO:0007669"/>
    <property type="project" value="UniProtKB-KW"/>
</dbReference>
<dbReference type="FunFam" id="3.40.50.720:FF:000542">
    <property type="entry name" value="Inositol-3-phosphate synthase 1"/>
    <property type="match status" value="1"/>
</dbReference>
<dbReference type="Gene3D" id="3.40.50.720">
    <property type="entry name" value="NAD(P)-binding Rossmann-like Domain"/>
    <property type="match status" value="2"/>
</dbReference>
<dbReference type="InterPro" id="IPR002587">
    <property type="entry name" value="Myo-inos-1-P_Synthase"/>
</dbReference>
<dbReference type="InterPro" id="IPR013021">
    <property type="entry name" value="Myo-inos-1-P_Synthase_GAPDH"/>
</dbReference>
<dbReference type="InterPro" id="IPR036291">
    <property type="entry name" value="NAD(P)-bd_dom_sf"/>
</dbReference>
<dbReference type="PANTHER" id="PTHR11510">
    <property type="entry name" value="MYO-INOSITOL-1 PHOSPHATE SYNTHASE"/>
    <property type="match status" value="1"/>
</dbReference>
<dbReference type="Pfam" id="PF01658">
    <property type="entry name" value="Inos-1-P_synth"/>
    <property type="match status" value="1"/>
</dbReference>
<dbReference type="Pfam" id="PF07994">
    <property type="entry name" value="NAD_binding_5"/>
    <property type="match status" value="1"/>
</dbReference>
<dbReference type="PIRSF" id="PIRSF015578">
    <property type="entry name" value="Myoinos-ppht_syn"/>
    <property type="match status" value="1"/>
</dbReference>
<dbReference type="SUPFAM" id="SSF55347">
    <property type="entry name" value="Glyceraldehyde-3-phosphate dehydrogenase-like, C-terminal domain"/>
    <property type="match status" value="1"/>
</dbReference>
<dbReference type="SUPFAM" id="SSF51735">
    <property type="entry name" value="NAD(P)-binding Rossmann-fold domains"/>
    <property type="match status" value="1"/>
</dbReference>
<proteinExistence type="inferred from homology"/>
<evidence type="ECO:0000250" key="1">
    <source>
        <dbReference type="UniProtKB" id="P11986"/>
    </source>
</evidence>
<evidence type="ECO:0000250" key="2">
    <source>
        <dbReference type="UniProtKB" id="Q8A7J8"/>
    </source>
</evidence>
<evidence type="ECO:0000250" key="3">
    <source>
        <dbReference type="UniProtKB" id="Q9NPH2"/>
    </source>
</evidence>
<evidence type="ECO:0000269" key="4">
    <source>
    </source>
</evidence>
<evidence type="ECO:0000303" key="5">
    <source>
    </source>
</evidence>
<evidence type="ECO:0000305" key="6"/>
<evidence type="ECO:0000312" key="7">
    <source>
        <dbReference type="EMBL" id="CAD51482.1"/>
    </source>
</evidence>
<evidence type="ECO:0000312" key="8">
    <source>
        <dbReference type="Proteomes" id="UP000001450"/>
    </source>
</evidence>
<reference evidence="8" key="1">
    <citation type="journal article" date="2002" name="Nature">
        <title>Genome sequence of the human malaria parasite Plasmodium falciparum.</title>
        <authorList>
            <person name="Gardner M.J."/>
            <person name="Hall N."/>
            <person name="Fung E."/>
            <person name="White O."/>
            <person name="Berriman M."/>
            <person name="Hyman R.W."/>
            <person name="Carlton J.M."/>
            <person name="Pain A."/>
            <person name="Nelson K.E."/>
            <person name="Bowman S."/>
            <person name="Paulsen I.T."/>
            <person name="James K.D."/>
            <person name="Eisen J.A."/>
            <person name="Rutherford K.M."/>
            <person name="Salzberg S.L."/>
            <person name="Craig A."/>
            <person name="Kyes S."/>
            <person name="Chan M.-S."/>
            <person name="Nene V."/>
            <person name="Shallom S.J."/>
            <person name="Suh B."/>
            <person name="Peterson J."/>
            <person name="Angiuoli S."/>
            <person name="Pertea M."/>
            <person name="Allen J."/>
            <person name="Selengut J."/>
            <person name="Haft D."/>
            <person name="Mather M.W."/>
            <person name="Vaidya A.B."/>
            <person name="Martin D.M.A."/>
            <person name="Fairlamb A.H."/>
            <person name="Fraunholz M.J."/>
            <person name="Roos D.S."/>
            <person name="Ralph S.A."/>
            <person name="McFadden G.I."/>
            <person name="Cummings L.M."/>
            <person name="Subramanian G.M."/>
            <person name="Mungall C."/>
            <person name="Venter J.C."/>
            <person name="Carucci D.J."/>
            <person name="Hoffman S.L."/>
            <person name="Newbold C."/>
            <person name="Davis R.W."/>
            <person name="Fraser C.M."/>
            <person name="Barrell B.G."/>
        </authorList>
    </citation>
    <scope>NUCLEOTIDE SEQUENCE [LARGE SCALE GENOMIC DNA]</scope>
    <source>
        <strain evidence="8">3D7</strain>
    </source>
</reference>
<reference evidence="8" key="2">
    <citation type="journal article" date="2002" name="Nature">
        <title>Sequence of Plasmodium falciparum chromosomes 1, 3-9 and 13.</title>
        <authorList>
            <person name="Hall N."/>
            <person name="Pain A."/>
            <person name="Berriman M."/>
            <person name="Churcher C.M."/>
            <person name="Harris B."/>
            <person name="Harris D."/>
            <person name="Mungall K.L."/>
            <person name="Bowman S."/>
            <person name="Atkin R."/>
            <person name="Baker S."/>
            <person name="Barron A."/>
            <person name="Brooks K."/>
            <person name="Buckee C.O."/>
            <person name="Burrows C."/>
            <person name="Cherevach I."/>
            <person name="Chillingworth C."/>
            <person name="Chillingworth T."/>
            <person name="Christodoulou Z."/>
            <person name="Clark L."/>
            <person name="Clark R."/>
            <person name="Corton C."/>
            <person name="Cronin A."/>
            <person name="Davies R.M."/>
            <person name="Davis P."/>
            <person name="Dear P."/>
            <person name="Dearden F."/>
            <person name="Doggett J."/>
            <person name="Feltwell T."/>
            <person name="Goble A."/>
            <person name="Goodhead I."/>
            <person name="Gwilliam R."/>
            <person name="Hamlin N."/>
            <person name="Hance Z."/>
            <person name="Harper D."/>
            <person name="Hauser H."/>
            <person name="Hornsby T."/>
            <person name="Holroyd S."/>
            <person name="Horrocks P."/>
            <person name="Humphray S."/>
            <person name="Jagels K."/>
            <person name="James K.D."/>
            <person name="Johnson D."/>
            <person name="Kerhornou A."/>
            <person name="Knights A."/>
            <person name="Konfortov B."/>
            <person name="Kyes S."/>
            <person name="Larke N."/>
            <person name="Lawson D."/>
            <person name="Lennard N."/>
            <person name="Line A."/>
            <person name="Maddison M."/>
            <person name="Mclean J."/>
            <person name="Mooney P."/>
            <person name="Moule S."/>
            <person name="Murphy L."/>
            <person name="Oliver K."/>
            <person name="Ormond D."/>
            <person name="Price C."/>
            <person name="Quail M.A."/>
            <person name="Rabbinowitsch E."/>
            <person name="Rajandream M.A."/>
            <person name="Rutter S."/>
            <person name="Rutherford K.M."/>
            <person name="Sanders M."/>
            <person name="Simmonds M."/>
            <person name="Seeger K."/>
            <person name="Sharp S."/>
            <person name="Smith R."/>
            <person name="Squares R."/>
            <person name="Squares S."/>
            <person name="Stevens K."/>
            <person name="Taylor K."/>
            <person name="Tivey A."/>
            <person name="Unwin L."/>
            <person name="Whitehead S."/>
            <person name="Woodward J.R."/>
            <person name="Sulston J.E."/>
            <person name="Craig A."/>
            <person name="Newbold C."/>
            <person name="Barrell B.G."/>
        </authorList>
    </citation>
    <scope>NUCLEOTIDE SEQUENCE [LARGE SCALE GENOMIC DNA]</scope>
    <source>
        <strain evidence="8">3D7</strain>
    </source>
</reference>
<reference evidence="6" key="3">
    <citation type="journal article" date="2014" name="Mol. Microbiol.">
        <title>Plasmodium falciparum is dependent on de novo myo-inositol biosynthesis for assembly of GPI glycolipids and infectivity.</title>
        <authorList>
            <person name="Macrae J.I."/>
            <person name="Lopaticki S."/>
            <person name="Maier A.G."/>
            <person name="Rupasinghe T."/>
            <person name="Nahid A."/>
            <person name="Cowman A.F."/>
            <person name="McConville M.J."/>
        </authorList>
    </citation>
    <scope>FUNCTION</scope>
</reference>
<sequence length="604" mass="69112">METYKGIQFFSNKGTVKNAFKKSNLGYEVMLDRKEDENFIYSNYEHVETQVEKDSKGMVVCKKYKNTYEILVEKVKEKRLGVLLVGIGGNNATTMLGGICANAKDLSYMNKCDLKRSNYLGSVFLSSNIRLGYNEKDKEHAYAPIYKLIDIYNPENIVYGGWDINNMNLKDCLVRNKVFDNEVIEKIKDDLDYVPLKSVYFKGNFIAGNQQRRVNNILYGKNKLEILEQVREQIRNFKKQNNLNELIVLWSGNTEKNIPHIPGVNDTFLNILHACKKNHESVSPSVIYALAAILENSPFINSSPQNTLVSAVVQLAQQKGIFIIGNDLKTGQTKIKNFLLDFYFGTGLKPKSIVSYNHLGNNDGKNLSSDLQFYSKKVSKSNLICDYVRANENLYVDDEKDTNVLVKKSIDYCEGDSLNEKGKVSADIEDDCTYVESLEKQKVNSEIVIKYVPYVGDDKKAIDEYISEIFMNGKNTIVLYNICQDSMLASPILIDLILLVELSQRVFFKPNQEKKTNEDEHLLNENIQIEDYKLSHTILKPKYSSFKNLDSVLFLSSLFCKSPFNSTVYKTRHSFFSQLESLWNFVRIISGLPIDAHIDLPYMI</sequence>
<protein>
    <recommendedName>
        <fullName evidence="3">Inositol-3-phosphate synthase 1</fullName>
        <shortName evidence="3">IPS 1</shortName>
        <ecNumber evidence="1">5.5.1.4</ecNumber>
    </recommendedName>
    <alternativeName>
        <fullName evidence="2">Myo-inositol 1-phosphate synthase</fullName>
        <shortName evidence="3">MI-1-P synthase</shortName>
        <shortName evidence="3">MIP synthase</shortName>
        <shortName evidence="2">MIPS</shortName>
    </alternativeName>
</protein>
<keyword id="KW-0398">Inositol biosynthesis</keyword>
<keyword id="KW-0413">Isomerase</keyword>
<keyword id="KW-0444">Lipid biosynthesis</keyword>
<keyword id="KW-0443">Lipid metabolism</keyword>
<keyword id="KW-0520">NAD</keyword>
<keyword id="KW-0594">Phospholipid biosynthesis</keyword>
<keyword id="KW-1208">Phospholipid metabolism</keyword>
<keyword id="KW-1185">Reference proteome</keyword>
<accession>Q8I3Y8</accession>
<name>INO1_PLAF7</name>